<feature type="chain" id="PRO_1000023258" description="Thymidylate kinase">
    <location>
        <begin position="1"/>
        <end position="210"/>
    </location>
</feature>
<feature type="binding site" evidence="1">
    <location>
        <begin position="10"/>
        <end position="17"/>
    </location>
    <ligand>
        <name>ATP</name>
        <dbReference type="ChEBI" id="CHEBI:30616"/>
    </ligand>
</feature>
<gene>
    <name evidence="1" type="primary">tmk</name>
    <name type="ordered locus">Pmen_1633</name>
</gene>
<organism>
    <name type="scientific">Ectopseudomonas mendocina (strain ymp)</name>
    <name type="common">Pseudomonas mendocina</name>
    <dbReference type="NCBI Taxonomy" id="399739"/>
    <lineage>
        <taxon>Bacteria</taxon>
        <taxon>Pseudomonadati</taxon>
        <taxon>Pseudomonadota</taxon>
        <taxon>Gammaproteobacteria</taxon>
        <taxon>Pseudomonadales</taxon>
        <taxon>Pseudomonadaceae</taxon>
        <taxon>Ectopseudomonas</taxon>
    </lineage>
</organism>
<dbReference type="EC" id="2.7.4.9" evidence="1"/>
<dbReference type="EMBL" id="CP000680">
    <property type="protein sequence ID" value="ABP84397.1"/>
    <property type="molecule type" value="Genomic_DNA"/>
</dbReference>
<dbReference type="SMR" id="A4XST1"/>
<dbReference type="STRING" id="399739.Pmen_1633"/>
<dbReference type="KEGG" id="pmy:Pmen_1633"/>
<dbReference type="PATRIC" id="fig|399739.8.peg.1655"/>
<dbReference type="eggNOG" id="COG0125">
    <property type="taxonomic scope" value="Bacteria"/>
</dbReference>
<dbReference type="HOGENOM" id="CLU_049131_0_2_6"/>
<dbReference type="OrthoDB" id="9774907at2"/>
<dbReference type="GO" id="GO:0005829">
    <property type="term" value="C:cytosol"/>
    <property type="evidence" value="ECO:0007669"/>
    <property type="project" value="TreeGrafter"/>
</dbReference>
<dbReference type="GO" id="GO:0005524">
    <property type="term" value="F:ATP binding"/>
    <property type="evidence" value="ECO:0007669"/>
    <property type="project" value="UniProtKB-UniRule"/>
</dbReference>
<dbReference type="GO" id="GO:0004798">
    <property type="term" value="F:dTMP kinase activity"/>
    <property type="evidence" value="ECO:0007669"/>
    <property type="project" value="UniProtKB-UniRule"/>
</dbReference>
<dbReference type="GO" id="GO:0006233">
    <property type="term" value="P:dTDP biosynthetic process"/>
    <property type="evidence" value="ECO:0007669"/>
    <property type="project" value="InterPro"/>
</dbReference>
<dbReference type="GO" id="GO:0006235">
    <property type="term" value="P:dTTP biosynthetic process"/>
    <property type="evidence" value="ECO:0007669"/>
    <property type="project" value="UniProtKB-UniRule"/>
</dbReference>
<dbReference type="GO" id="GO:0006227">
    <property type="term" value="P:dUDP biosynthetic process"/>
    <property type="evidence" value="ECO:0007669"/>
    <property type="project" value="TreeGrafter"/>
</dbReference>
<dbReference type="CDD" id="cd01672">
    <property type="entry name" value="TMPK"/>
    <property type="match status" value="1"/>
</dbReference>
<dbReference type="FunFam" id="3.40.50.300:FF:000321">
    <property type="entry name" value="Thymidylate kinase"/>
    <property type="match status" value="1"/>
</dbReference>
<dbReference type="Gene3D" id="3.40.50.300">
    <property type="entry name" value="P-loop containing nucleotide triphosphate hydrolases"/>
    <property type="match status" value="1"/>
</dbReference>
<dbReference type="HAMAP" id="MF_00165">
    <property type="entry name" value="Thymidylate_kinase"/>
    <property type="match status" value="1"/>
</dbReference>
<dbReference type="InterPro" id="IPR027417">
    <property type="entry name" value="P-loop_NTPase"/>
</dbReference>
<dbReference type="InterPro" id="IPR039430">
    <property type="entry name" value="Thymidylate_kin-like_dom"/>
</dbReference>
<dbReference type="InterPro" id="IPR018094">
    <property type="entry name" value="Thymidylate_kinase"/>
</dbReference>
<dbReference type="NCBIfam" id="TIGR00041">
    <property type="entry name" value="DTMP_kinase"/>
    <property type="match status" value="1"/>
</dbReference>
<dbReference type="PANTHER" id="PTHR10344">
    <property type="entry name" value="THYMIDYLATE KINASE"/>
    <property type="match status" value="1"/>
</dbReference>
<dbReference type="PANTHER" id="PTHR10344:SF4">
    <property type="entry name" value="UMP-CMP KINASE 2, MITOCHONDRIAL"/>
    <property type="match status" value="1"/>
</dbReference>
<dbReference type="Pfam" id="PF02223">
    <property type="entry name" value="Thymidylate_kin"/>
    <property type="match status" value="1"/>
</dbReference>
<dbReference type="SUPFAM" id="SSF52540">
    <property type="entry name" value="P-loop containing nucleoside triphosphate hydrolases"/>
    <property type="match status" value="1"/>
</dbReference>
<protein>
    <recommendedName>
        <fullName evidence="1">Thymidylate kinase</fullName>
        <ecNumber evidence="1">2.7.4.9</ecNumber>
    </recommendedName>
    <alternativeName>
        <fullName evidence="1">dTMP kinase</fullName>
    </alternativeName>
</protein>
<keyword id="KW-0067">ATP-binding</keyword>
<keyword id="KW-0418">Kinase</keyword>
<keyword id="KW-0545">Nucleotide biosynthesis</keyword>
<keyword id="KW-0547">Nucleotide-binding</keyword>
<keyword id="KW-0808">Transferase</keyword>
<name>KTHY_ECTM1</name>
<sequence>MTGLFITLEGPEGAGKSTNREYLAERLREQGVDVVLTREPGGTPLAERIRELLLDPSDEPMAADTELLLVFAARAQHLQQVIRPALAKGCVVLCDRFTDATYAYQGGGRGLSIERIAQLEQFVQGELRPDLTLIFDLPVEVGLARAAARGRLDRFEQEGRGFFEAVRQAYLQRAVQAPQHYRVLDAGQTLAQVQADIDALLPSLLEACRG</sequence>
<evidence type="ECO:0000255" key="1">
    <source>
        <dbReference type="HAMAP-Rule" id="MF_00165"/>
    </source>
</evidence>
<comment type="function">
    <text evidence="1">Phosphorylation of dTMP to form dTDP in both de novo and salvage pathways of dTTP synthesis.</text>
</comment>
<comment type="catalytic activity">
    <reaction evidence="1">
        <text>dTMP + ATP = dTDP + ADP</text>
        <dbReference type="Rhea" id="RHEA:13517"/>
        <dbReference type="ChEBI" id="CHEBI:30616"/>
        <dbReference type="ChEBI" id="CHEBI:58369"/>
        <dbReference type="ChEBI" id="CHEBI:63528"/>
        <dbReference type="ChEBI" id="CHEBI:456216"/>
        <dbReference type="EC" id="2.7.4.9"/>
    </reaction>
</comment>
<comment type="similarity">
    <text evidence="1">Belongs to the thymidylate kinase family.</text>
</comment>
<proteinExistence type="inferred from homology"/>
<reference key="1">
    <citation type="submission" date="2007-04" db="EMBL/GenBank/DDBJ databases">
        <title>Complete sequence of Pseudomonas mendocina ymp.</title>
        <authorList>
            <consortium name="US DOE Joint Genome Institute"/>
            <person name="Copeland A."/>
            <person name="Lucas S."/>
            <person name="Lapidus A."/>
            <person name="Barry K."/>
            <person name="Glavina del Rio T."/>
            <person name="Dalin E."/>
            <person name="Tice H."/>
            <person name="Pitluck S."/>
            <person name="Kiss H."/>
            <person name="Brettin T."/>
            <person name="Detter J.C."/>
            <person name="Bruce D."/>
            <person name="Han C."/>
            <person name="Schmutz J."/>
            <person name="Larimer F."/>
            <person name="Land M."/>
            <person name="Hauser L."/>
            <person name="Kyrpides N."/>
            <person name="Mikhailova N."/>
            <person name="Hersman L."/>
            <person name="Dubois J."/>
            <person name="Maurice P."/>
            <person name="Richardson P."/>
        </authorList>
    </citation>
    <scope>NUCLEOTIDE SEQUENCE [LARGE SCALE GENOMIC DNA]</scope>
    <source>
        <strain>ymp</strain>
    </source>
</reference>
<accession>A4XST1</accession>